<dbReference type="EC" id="2.7.8.13" evidence="1"/>
<dbReference type="EMBL" id="BA000039">
    <property type="protein sequence ID" value="BAC08523.1"/>
    <property type="molecule type" value="Genomic_DNA"/>
</dbReference>
<dbReference type="RefSeq" id="NP_681761.1">
    <property type="nucleotide sequence ID" value="NC_004113.1"/>
</dbReference>
<dbReference type="SMR" id="Q8DK95"/>
<dbReference type="STRING" id="197221.gene:10747563"/>
<dbReference type="EnsemblBacteria" id="BAC08523">
    <property type="protein sequence ID" value="BAC08523"/>
    <property type="gene ID" value="BAC08523"/>
</dbReference>
<dbReference type="KEGG" id="tel:tll0971"/>
<dbReference type="PATRIC" id="fig|197221.4.peg.1019"/>
<dbReference type="eggNOG" id="COG0472">
    <property type="taxonomic scope" value="Bacteria"/>
</dbReference>
<dbReference type="UniPathway" id="UPA00219"/>
<dbReference type="Proteomes" id="UP000000440">
    <property type="component" value="Chromosome"/>
</dbReference>
<dbReference type="GO" id="GO:0005886">
    <property type="term" value="C:plasma membrane"/>
    <property type="evidence" value="ECO:0007669"/>
    <property type="project" value="UniProtKB-SubCell"/>
</dbReference>
<dbReference type="GO" id="GO:0046872">
    <property type="term" value="F:metal ion binding"/>
    <property type="evidence" value="ECO:0007669"/>
    <property type="project" value="UniProtKB-KW"/>
</dbReference>
<dbReference type="GO" id="GO:0008963">
    <property type="term" value="F:phospho-N-acetylmuramoyl-pentapeptide-transferase activity"/>
    <property type="evidence" value="ECO:0007669"/>
    <property type="project" value="UniProtKB-UniRule"/>
</dbReference>
<dbReference type="GO" id="GO:0051992">
    <property type="term" value="F:UDP-N-acetylmuramoyl-L-alanyl-D-glutamyl-meso-2,6-diaminopimelyl-D-alanyl-D-alanine:undecaprenyl-phosphate transferase activity"/>
    <property type="evidence" value="ECO:0007669"/>
    <property type="project" value="RHEA"/>
</dbReference>
<dbReference type="GO" id="GO:0051301">
    <property type="term" value="P:cell division"/>
    <property type="evidence" value="ECO:0007669"/>
    <property type="project" value="UniProtKB-KW"/>
</dbReference>
<dbReference type="GO" id="GO:0071555">
    <property type="term" value="P:cell wall organization"/>
    <property type="evidence" value="ECO:0007669"/>
    <property type="project" value="UniProtKB-KW"/>
</dbReference>
<dbReference type="GO" id="GO:0009252">
    <property type="term" value="P:peptidoglycan biosynthetic process"/>
    <property type="evidence" value="ECO:0007669"/>
    <property type="project" value="UniProtKB-UniRule"/>
</dbReference>
<dbReference type="GO" id="GO:0008360">
    <property type="term" value="P:regulation of cell shape"/>
    <property type="evidence" value="ECO:0007669"/>
    <property type="project" value="UniProtKB-KW"/>
</dbReference>
<dbReference type="CDD" id="cd06852">
    <property type="entry name" value="GT_MraY"/>
    <property type="match status" value="1"/>
</dbReference>
<dbReference type="HAMAP" id="MF_00038">
    <property type="entry name" value="MraY"/>
    <property type="match status" value="1"/>
</dbReference>
<dbReference type="InterPro" id="IPR000715">
    <property type="entry name" value="Glycosyl_transferase_4"/>
</dbReference>
<dbReference type="InterPro" id="IPR003524">
    <property type="entry name" value="PNAcMuramoyl-5peptid_Trfase"/>
</dbReference>
<dbReference type="InterPro" id="IPR018480">
    <property type="entry name" value="PNAcMuramoyl-5peptid_Trfase_CS"/>
</dbReference>
<dbReference type="NCBIfam" id="TIGR00445">
    <property type="entry name" value="mraY"/>
    <property type="match status" value="1"/>
</dbReference>
<dbReference type="PANTHER" id="PTHR22926">
    <property type="entry name" value="PHOSPHO-N-ACETYLMURAMOYL-PENTAPEPTIDE-TRANSFERASE"/>
    <property type="match status" value="1"/>
</dbReference>
<dbReference type="PANTHER" id="PTHR22926:SF5">
    <property type="entry name" value="PHOSPHO-N-ACETYLMURAMOYL-PENTAPEPTIDE-TRANSFERASE HOMOLOG"/>
    <property type="match status" value="1"/>
</dbReference>
<dbReference type="Pfam" id="PF00953">
    <property type="entry name" value="Glycos_transf_4"/>
    <property type="match status" value="1"/>
</dbReference>
<dbReference type="Pfam" id="PF10555">
    <property type="entry name" value="MraY_sig1"/>
    <property type="match status" value="1"/>
</dbReference>
<dbReference type="PROSITE" id="PS01347">
    <property type="entry name" value="MRAY_1"/>
    <property type="match status" value="1"/>
</dbReference>
<dbReference type="PROSITE" id="PS01348">
    <property type="entry name" value="MRAY_2"/>
    <property type="match status" value="1"/>
</dbReference>
<protein>
    <recommendedName>
        <fullName evidence="1">Phospho-N-acetylmuramoyl-pentapeptide-transferase</fullName>
        <ecNumber evidence="1">2.7.8.13</ecNumber>
    </recommendedName>
    <alternativeName>
        <fullName evidence="1">UDP-MurNAc-pentapeptide phosphotransferase</fullName>
    </alternativeName>
</protein>
<keyword id="KW-0131">Cell cycle</keyword>
<keyword id="KW-0132">Cell division</keyword>
<keyword id="KW-0997">Cell inner membrane</keyword>
<keyword id="KW-1003">Cell membrane</keyword>
<keyword id="KW-0133">Cell shape</keyword>
<keyword id="KW-0961">Cell wall biogenesis/degradation</keyword>
<keyword id="KW-0460">Magnesium</keyword>
<keyword id="KW-0472">Membrane</keyword>
<keyword id="KW-0479">Metal-binding</keyword>
<keyword id="KW-0573">Peptidoglycan synthesis</keyword>
<keyword id="KW-1185">Reference proteome</keyword>
<keyword id="KW-0808">Transferase</keyword>
<keyword id="KW-0812">Transmembrane</keyword>
<keyword id="KW-1133">Transmembrane helix</keyword>
<accession>Q8DK95</accession>
<evidence type="ECO:0000255" key="1">
    <source>
        <dbReference type="HAMAP-Rule" id="MF_00038"/>
    </source>
</evidence>
<feature type="chain" id="PRO_0000108913" description="Phospho-N-acetylmuramoyl-pentapeptide-transferase">
    <location>
        <begin position="1"/>
        <end position="378"/>
    </location>
</feature>
<feature type="transmembrane region" description="Helical" evidence="1">
    <location>
        <begin position="26"/>
        <end position="46"/>
    </location>
</feature>
<feature type="transmembrane region" description="Helical" evidence="1">
    <location>
        <begin position="57"/>
        <end position="77"/>
    </location>
</feature>
<feature type="transmembrane region" description="Helical" evidence="1">
    <location>
        <begin position="103"/>
        <end position="123"/>
    </location>
</feature>
<feature type="transmembrane region" description="Helical" evidence="1">
    <location>
        <begin position="127"/>
        <end position="147"/>
    </location>
</feature>
<feature type="transmembrane region" description="Helical" evidence="1">
    <location>
        <begin position="171"/>
        <end position="191"/>
    </location>
</feature>
<feature type="transmembrane region" description="Helical" evidence="1">
    <location>
        <begin position="195"/>
        <end position="215"/>
    </location>
</feature>
<feature type="transmembrane region" description="Helical" evidence="1">
    <location>
        <begin position="225"/>
        <end position="245"/>
    </location>
</feature>
<feature type="transmembrane region" description="Helical" evidence="1">
    <location>
        <begin position="247"/>
        <end position="267"/>
    </location>
</feature>
<feature type="transmembrane region" description="Helical" evidence="1">
    <location>
        <begin position="275"/>
        <end position="295"/>
    </location>
</feature>
<feature type="transmembrane region" description="Helical" evidence="1">
    <location>
        <begin position="302"/>
        <end position="322"/>
    </location>
</feature>
<feature type="transmembrane region" description="Helical" evidence="1">
    <location>
        <begin position="356"/>
        <end position="376"/>
    </location>
</feature>
<gene>
    <name evidence="1" type="primary">mraY</name>
    <name type="ordered locus">tll0971</name>
</gene>
<comment type="function">
    <text evidence="1">Catalyzes the initial step of the lipid cycle reactions in the biosynthesis of the cell wall peptidoglycan: transfers peptidoglycan precursor phospho-MurNAc-pentapeptide from UDP-MurNAc-pentapeptide onto the lipid carrier undecaprenyl phosphate, yielding undecaprenyl-pyrophosphoryl-MurNAc-pentapeptide, known as lipid I.</text>
</comment>
<comment type="catalytic activity">
    <reaction evidence="1">
        <text>UDP-N-acetyl-alpha-D-muramoyl-L-alanyl-gamma-D-glutamyl-meso-2,6-diaminopimeloyl-D-alanyl-D-alanine + di-trans,octa-cis-undecaprenyl phosphate = di-trans,octa-cis-undecaprenyl diphospho-N-acetyl-alpha-D-muramoyl-L-alanyl-D-glutamyl-meso-2,6-diaminopimeloyl-D-alanyl-D-alanine + UMP</text>
        <dbReference type="Rhea" id="RHEA:28386"/>
        <dbReference type="ChEBI" id="CHEBI:57865"/>
        <dbReference type="ChEBI" id="CHEBI:60392"/>
        <dbReference type="ChEBI" id="CHEBI:61386"/>
        <dbReference type="ChEBI" id="CHEBI:61387"/>
        <dbReference type="EC" id="2.7.8.13"/>
    </reaction>
</comment>
<comment type="cofactor">
    <cofactor evidence="1">
        <name>Mg(2+)</name>
        <dbReference type="ChEBI" id="CHEBI:18420"/>
    </cofactor>
</comment>
<comment type="pathway">
    <text evidence="1">Cell wall biogenesis; peptidoglycan biosynthesis.</text>
</comment>
<comment type="subcellular location">
    <subcellularLocation>
        <location evidence="1">Cell inner membrane</location>
        <topology evidence="1">Multi-pass membrane protein</topology>
    </subcellularLocation>
</comment>
<comment type="similarity">
    <text evidence="1">Belongs to the glycosyltransferase 4 family. MraY subfamily.</text>
</comment>
<organism>
    <name type="scientific">Thermosynechococcus vestitus (strain NIES-2133 / IAM M-273 / BP-1)</name>
    <dbReference type="NCBI Taxonomy" id="197221"/>
    <lineage>
        <taxon>Bacteria</taxon>
        <taxon>Bacillati</taxon>
        <taxon>Cyanobacteriota</taxon>
        <taxon>Cyanophyceae</taxon>
        <taxon>Acaryochloridales</taxon>
        <taxon>Thermosynechococcaceae</taxon>
        <taxon>Thermosynechococcus</taxon>
    </lineage>
</organism>
<proteinExistence type="inferred from homology"/>
<name>MRAY_THEVB</name>
<sequence>MLERPPMPSTKTTAAIEPRWRAGQRLFRLLAIGLLIVTIAYDTGANHWQQPLQTLTLPWLVSFALVAVLGMAVVPLLRRLKTGQIIREDGPQSHLQKSGTPTMGGIFFVPTGLGLAFLWTGFAQGKLSPTVGAIALLVLWYAAIGWWDDWQVLRRQSNKGLSARLRLLLEGIGAALFCAWLVASDPTATVVTAPWGWVWPLGMAFIPLAIFVPMAEGNALNLTDGLDGLAGGTGAIALLTLGIILSPYPDLQILAVVMSGACLGFLWHNHHPARVFMGDTGSLALGAVLAGIGLASHHLWELLIVSGLFFVESLSVIAQVLYYKATKGPDGVGKRLLRMAPLHHHFELGGWSELRIVRTFYGVVALLGLLCVLLQWLA</sequence>
<reference key="1">
    <citation type="journal article" date="2002" name="DNA Res.">
        <title>Complete genome structure of the thermophilic cyanobacterium Thermosynechococcus elongatus BP-1.</title>
        <authorList>
            <person name="Nakamura Y."/>
            <person name="Kaneko T."/>
            <person name="Sato S."/>
            <person name="Ikeuchi M."/>
            <person name="Katoh H."/>
            <person name="Sasamoto S."/>
            <person name="Watanabe A."/>
            <person name="Iriguchi M."/>
            <person name="Kawashima K."/>
            <person name="Kimura T."/>
            <person name="Kishida Y."/>
            <person name="Kiyokawa C."/>
            <person name="Kohara M."/>
            <person name="Matsumoto M."/>
            <person name="Matsuno A."/>
            <person name="Nakazaki N."/>
            <person name="Shimpo S."/>
            <person name="Sugimoto M."/>
            <person name="Takeuchi C."/>
            <person name="Yamada M."/>
            <person name="Tabata S."/>
        </authorList>
    </citation>
    <scope>NUCLEOTIDE SEQUENCE [LARGE SCALE GENOMIC DNA]</scope>
    <source>
        <strain>NIES-2133 / IAM M-273 / BP-1</strain>
    </source>
</reference>